<sequence length="536" mass="59664">MEFSSPSREECPKPSGRVSIMAGSLTGLLLLQAVSWASGARPCIPKSFGYSSVVCVCNATYCDSFDPPTFPALGTFSRYESTRSGRRMELSMGTIQANHTGTGLLLTLQPEQKFQKVKGFGGAMTDAAALNILALSPPAQNLLLKSYFSEEGIGYNIIRVPMASCDFSIRTYTYADTPDDFQLHNFSLPEEDTKLKIPLIHRALQLAQRPVSLLASPWTSPTWLKTNGAVNGKGSLKGQPGDIYHQTWARYFVKFLDAYAEHKLQFWAVTAENEPSAGLLSGYPFQCLGFTPEHQRDFIARDLGPTLANSTHHNVRLLMLDDQRLLLPHWAKVVLTDPEAAKYVHGIAVHWYLDFLAPAKATLGETHRLFPNTMLFASEACVGSKFWEQSVRLGSWDRGMQYSHSIITNLLYHVVGWTDWNLALNPEGGPNWVRNFVDSPIIVDITKDTFYKQPMFYHLGHFSKFIPEGSQRVGLVASQKNDLDAVALMHPDGSAVVVVLNRSSKDVPLTIKDPAVGFLETISPGYSIHTYLWRRQ</sequence>
<accession>Q9BDT0</accession>
<dbReference type="EC" id="3.2.1.45" evidence="2"/>
<dbReference type="EC" id="2.4.1.-" evidence="2"/>
<dbReference type="EC" id="3.2.1.-" evidence="2"/>
<dbReference type="EC" id="3.2.1.46" evidence="2"/>
<dbReference type="EMBL" id="AF285236">
    <property type="protein sequence ID" value="AAK18162.1"/>
    <property type="molecule type" value="Genomic_DNA"/>
</dbReference>
<dbReference type="RefSeq" id="NP_001008997.1">
    <property type="nucleotide sequence ID" value="NM_001008997.1"/>
</dbReference>
<dbReference type="RefSeq" id="XP_016804027.1">
    <property type="nucleotide sequence ID" value="XM_016948538.1"/>
</dbReference>
<dbReference type="RefSeq" id="XP_016804063.1">
    <property type="nucleotide sequence ID" value="XM_016948574.4"/>
</dbReference>
<dbReference type="RefSeq" id="XP_054534791.1">
    <property type="nucleotide sequence ID" value="XM_054678816.2"/>
</dbReference>
<dbReference type="RefSeq" id="XP_063667327.1">
    <property type="nucleotide sequence ID" value="XM_063811257.1"/>
</dbReference>
<dbReference type="SMR" id="Q9BDT0"/>
<dbReference type="FunCoup" id="Q9BDT0">
    <property type="interactions" value="507"/>
</dbReference>
<dbReference type="STRING" id="9598.ENSPTRP00000051730"/>
<dbReference type="CAZy" id="GH30">
    <property type="family name" value="Glycoside Hydrolase Family 30"/>
</dbReference>
<dbReference type="GlyCosmos" id="Q9BDT0">
    <property type="glycosylation" value="5 sites, No reported glycans"/>
</dbReference>
<dbReference type="PaxDb" id="9598-ENSPTRP00000051730"/>
<dbReference type="Ensembl" id="ENSPTRT00000002601.6">
    <property type="protein sequence ID" value="ENSPTRP00000051730.4"/>
    <property type="gene ID" value="ENSPTRG00000001416.5"/>
</dbReference>
<dbReference type="GeneID" id="449571"/>
<dbReference type="KEGG" id="ptr:449571"/>
<dbReference type="CTD" id="2629"/>
<dbReference type="VGNC" id="VGNC:58837">
    <property type="gene designation" value="GBA1"/>
</dbReference>
<dbReference type="eggNOG" id="KOG2566">
    <property type="taxonomic scope" value="Eukaryota"/>
</dbReference>
<dbReference type="GeneTree" id="ENSGT00390000009464"/>
<dbReference type="InParanoid" id="Q9BDT0"/>
<dbReference type="OMA" id="FGGIAWH"/>
<dbReference type="OrthoDB" id="1704at9604"/>
<dbReference type="UniPathway" id="UPA00296"/>
<dbReference type="Proteomes" id="UP000002277">
    <property type="component" value="Chromosome 1"/>
</dbReference>
<dbReference type="Bgee" id="ENSPTRG00000001416">
    <property type="expression patterns" value="Expressed in dorsolateral prefrontal cortex and 21 other cell types or tissues"/>
</dbReference>
<dbReference type="GO" id="GO:0005783">
    <property type="term" value="C:endoplasmic reticulum"/>
    <property type="evidence" value="ECO:0000250"/>
    <property type="project" value="UniProtKB"/>
</dbReference>
<dbReference type="GO" id="GO:0005794">
    <property type="term" value="C:Golgi apparatus"/>
    <property type="evidence" value="ECO:0000250"/>
    <property type="project" value="UniProtKB"/>
</dbReference>
<dbReference type="GO" id="GO:0005765">
    <property type="term" value="C:lysosomal membrane"/>
    <property type="evidence" value="ECO:0000250"/>
    <property type="project" value="UniProtKB"/>
</dbReference>
<dbReference type="GO" id="GO:0005764">
    <property type="term" value="C:lysosome"/>
    <property type="evidence" value="ECO:0000250"/>
    <property type="project" value="UniProtKB"/>
</dbReference>
<dbReference type="GO" id="GO:0005802">
    <property type="term" value="C:trans-Golgi network"/>
    <property type="evidence" value="ECO:0000250"/>
    <property type="project" value="UniProtKB"/>
</dbReference>
<dbReference type="GO" id="GO:0004336">
    <property type="term" value="F:galactosylceramidase activity"/>
    <property type="evidence" value="ECO:0007669"/>
    <property type="project" value="RHEA"/>
</dbReference>
<dbReference type="GO" id="GO:0004348">
    <property type="term" value="F:glucosylceramidase activity"/>
    <property type="evidence" value="ECO:0000250"/>
    <property type="project" value="UniProtKB"/>
</dbReference>
<dbReference type="GO" id="GO:0046527">
    <property type="term" value="F:glucosyltransferase activity"/>
    <property type="evidence" value="ECO:0000250"/>
    <property type="project" value="UniProtKB"/>
</dbReference>
<dbReference type="GO" id="GO:0005124">
    <property type="term" value="F:scavenger receptor binding"/>
    <property type="evidence" value="ECO:0007669"/>
    <property type="project" value="Ensembl"/>
</dbReference>
<dbReference type="GO" id="GO:0050295">
    <property type="term" value="F:steryl-beta-glucosidase activity"/>
    <property type="evidence" value="ECO:0000250"/>
    <property type="project" value="UniProtKB"/>
</dbReference>
<dbReference type="GO" id="GO:0006914">
    <property type="term" value="P:autophagy"/>
    <property type="evidence" value="ECO:0000250"/>
    <property type="project" value="UniProtKB"/>
</dbReference>
<dbReference type="GO" id="GO:0071356">
    <property type="term" value="P:cellular response to tumor necrosis factor"/>
    <property type="evidence" value="ECO:0007669"/>
    <property type="project" value="Ensembl"/>
</dbReference>
<dbReference type="GO" id="GO:0046513">
    <property type="term" value="P:ceramide biosynthetic process"/>
    <property type="evidence" value="ECO:0007669"/>
    <property type="project" value="Ensembl"/>
</dbReference>
<dbReference type="GO" id="GO:0008203">
    <property type="term" value="P:cholesterol metabolic process"/>
    <property type="evidence" value="ECO:0000250"/>
    <property type="project" value="UniProtKB"/>
</dbReference>
<dbReference type="GO" id="GO:0006680">
    <property type="term" value="P:glucosylceramide catabolic process"/>
    <property type="evidence" value="ECO:0000250"/>
    <property type="project" value="UniProtKB"/>
</dbReference>
<dbReference type="GO" id="GO:0030259">
    <property type="term" value="P:lipid glycosylation"/>
    <property type="evidence" value="ECO:0000250"/>
    <property type="project" value="UniProtKB"/>
</dbReference>
<dbReference type="GO" id="GO:1905146">
    <property type="term" value="P:lysosomal protein catabolic process"/>
    <property type="evidence" value="ECO:0007669"/>
    <property type="project" value="Ensembl"/>
</dbReference>
<dbReference type="GO" id="GO:0007040">
    <property type="term" value="P:lysosome organization"/>
    <property type="evidence" value="ECO:0000250"/>
    <property type="project" value="UniProtKB"/>
</dbReference>
<dbReference type="GO" id="GO:0050728">
    <property type="term" value="P:negative regulation of inflammatory response"/>
    <property type="evidence" value="ECO:0007669"/>
    <property type="project" value="Ensembl"/>
</dbReference>
<dbReference type="GO" id="GO:0032715">
    <property type="term" value="P:negative regulation of interleukin-6 production"/>
    <property type="evidence" value="ECO:0007669"/>
    <property type="project" value="Ensembl"/>
</dbReference>
<dbReference type="GO" id="GO:0043409">
    <property type="term" value="P:negative regulation of MAPK cascade"/>
    <property type="evidence" value="ECO:0007669"/>
    <property type="project" value="Ensembl"/>
</dbReference>
<dbReference type="GO" id="GO:1904457">
    <property type="term" value="P:positive regulation of neuronal action potential"/>
    <property type="evidence" value="ECO:0007669"/>
    <property type="project" value="Ensembl"/>
</dbReference>
<dbReference type="GO" id="GO:0032006">
    <property type="term" value="P:regulation of TOR signaling"/>
    <property type="evidence" value="ECO:0000250"/>
    <property type="project" value="UniProtKB"/>
</dbReference>
<dbReference type="GO" id="GO:0046512">
    <property type="term" value="P:sphingosine biosynthetic process"/>
    <property type="evidence" value="ECO:0007669"/>
    <property type="project" value="Ensembl"/>
</dbReference>
<dbReference type="GO" id="GO:0023021">
    <property type="term" value="P:termination of signal transduction"/>
    <property type="evidence" value="ECO:0007669"/>
    <property type="project" value="Ensembl"/>
</dbReference>
<dbReference type="FunFam" id="3.20.20.80:FF:000030">
    <property type="entry name" value="Lysosomal acid glucosylceramidase"/>
    <property type="match status" value="1"/>
</dbReference>
<dbReference type="Gene3D" id="3.20.20.80">
    <property type="entry name" value="Glycosidases"/>
    <property type="match status" value="1"/>
</dbReference>
<dbReference type="InterPro" id="IPR033452">
    <property type="entry name" value="GH30_C"/>
</dbReference>
<dbReference type="InterPro" id="IPR001139">
    <property type="entry name" value="Glyco_hydro_30"/>
</dbReference>
<dbReference type="InterPro" id="IPR033453">
    <property type="entry name" value="Glyco_hydro_30_TIM-barrel"/>
</dbReference>
<dbReference type="InterPro" id="IPR017853">
    <property type="entry name" value="Glycoside_hydrolase_SF"/>
</dbReference>
<dbReference type="PANTHER" id="PTHR11069">
    <property type="entry name" value="GLUCOSYLCERAMIDASE"/>
    <property type="match status" value="1"/>
</dbReference>
<dbReference type="PANTHER" id="PTHR11069:SF33">
    <property type="entry name" value="LYSOSOMAL ACID GLUCOSYLCERAMIDASE"/>
    <property type="match status" value="1"/>
</dbReference>
<dbReference type="Pfam" id="PF02055">
    <property type="entry name" value="Glyco_hydro_30"/>
    <property type="match status" value="1"/>
</dbReference>
<dbReference type="Pfam" id="PF17189">
    <property type="entry name" value="Glyco_hydro_30C"/>
    <property type="match status" value="1"/>
</dbReference>
<dbReference type="PRINTS" id="PR00843">
    <property type="entry name" value="GLHYDRLASE30"/>
</dbReference>
<dbReference type="SUPFAM" id="SSF51445">
    <property type="entry name" value="(Trans)glycosidases"/>
    <property type="match status" value="1"/>
</dbReference>
<dbReference type="SUPFAM" id="SSF51011">
    <property type="entry name" value="Glycosyl hydrolase domain"/>
    <property type="match status" value="2"/>
</dbReference>
<gene>
    <name type="primary">GBA1</name>
    <name evidence="2" type="synonym">GBA</name>
    <name type="synonym">GC</name>
</gene>
<keyword id="KW-0153">Cholesterol metabolism</keyword>
<keyword id="KW-1015">Disulfide bond</keyword>
<keyword id="KW-0325">Glycoprotein</keyword>
<keyword id="KW-0326">Glycosidase</keyword>
<keyword id="KW-0328">Glycosyltransferase</keyword>
<keyword id="KW-0378">Hydrolase</keyword>
<keyword id="KW-0443">Lipid metabolism</keyword>
<keyword id="KW-0458">Lysosome</keyword>
<keyword id="KW-0472">Membrane</keyword>
<keyword id="KW-1185">Reference proteome</keyword>
<keyword id="KW-0732">Signal</keyword>
<keyword id="KW-0746">Sphingolipid metabolism</keyword>
<keyword id="KW-0753">Steroid metabolism</keyword>
<keyword id="KW-1207">Sterol metabolism</keyword>
<keyword id="KW-0808">Transferase</keyword>
<feature type="signal peptide" evidence="1">
    <location>
        <begin position="1"/>
        <end position="39"/>
    </location>
</feature>
<feature type="chain" id="PRO_0000012179" description="Lysosomal acid glucosylceramidase">
    <location>
        <begin position="40"/>
        <end position="536"/>
    </location>
</feature>
<feature type="active site" description="Proton donor" evidence="1">
    <location>
        <position position="274"/>
    </location>
</feature>
<feature type="active site" description="Nucleophile" evidence="1">
    <location>
        <position position="379"/>
    </location>
</feature>
<feature type="glycosylation site" description="N-linked (GlcNAc...) asparagine" evidence="3">
    <location>
        <position position="58"/>
    </location>
</feature>
<feature type="glycosylation site" description="N-linked (GlcNAc...) asparagine" evidence="3">
    <location>
        <position position="98"/>
    </location>
</feature>
<feature type="glycosylation site" description="N-linked (GlcNAc...) asparagine" evidence="3">
    <location>
        <position position="185"/>
    </location>
</feature>
<feature type="glycosylation site" description="N-linked (GlcNAc...) asparagine" evidence="3">
    <location>
        <position position="309"/>
    </location>
</feature>
<feature type="glycosylation site" description="N-linked (GlcNAc...) asparagine" evidence="3">
    <location>
        <position position="501"/>
    </location>
</feature>
<feature type="disulfide bond" evidence="2">
    <location>
        <begin position="43"/>
        <end position="55"/>
    </location>
</feature>
<feature type="disulfide bond" evidence="2">
    <location>
        <begin position="57"/>
        <end position="62"/>
    </location>
</feature>
<reference key="1">
    <citation type="submission" date="2000-07" db="EMBL/GenBank/DDBJ databases">
        <title>Allelic variability on the glucocerebrosidase pseudogene.</title>
        <authorList>
            <person name="Martinez-Arias R."/>
            <person name="Comas D."/>
            <person name="Bertranpetit J."/>
        </authorList>
    </citation>
    <scope>NUCLEOTIDE SEQUENCE [GENOMIC DNA]</scope>
</reference>
<organism>
    <name type="scientific">Pan troglodytes</name>
    <name type="common">Chimpanzee</name>
    <dbReference type="NCBI Taxonomy" id="9598"/>
    <lineage>
        <taxon>Eukaryota</taxon>
        <taxon>Metazoa</taxon>
        <taxon>Chordata</taxon>
        <taxon>Craniata</taxon>
        <taxon>Vertebrata</taxon>
        <taxon>Euteleostomi</taxon>
        <taxon>Mammalia</taxon>
        <taxon>Eutheria</taxon>
        <taxon>Euarchontoglires</taxon>
        <taxon>Primates</taxon>
        <taxon>Haplorrhini</taxon>
        <taxon>Catarrhini</taxon>
        <taxon>Hominidae</taxon>
        <taxon>Pan</taxon>
    </lineage>
</organism>
<protein>
    <recommendedName>
        <fullName evidence="4">Lysosomal acid glucosylceramidase</fullName>
        <ecNumber evidence="2">3.2.1.45</ecNumber>
    </recommendedName>
    <alternativeName>
        <fullName>Acid beta-glucosidase</fullName>
    </alternativeName>
    <alternativeName>
        <fullName>Beta-glucocerebrosidase</fullName>
    </alternativeName>
    <alternativeName>
        <fullName evidence="2">Cholesterol glucosyltransferase</fullName>
        <shortName evidence="2">SGTase</shortName>
        <ecNumber evidence="2">2.4.1.-</ecNumber>
    </alternativeName>
    <alternativeName>
        <fullName evidence="2">Cholesteryl-beta-glucosidase</fullName>
        <ecNumber evidence="2">3.2.1.-</ecNumber>
    </alternativeName>
    <alternativeName>
        <fullName>D-glucosyl-N-acylsphingosine glucohydrolase</fullName>
    </alternativeName>
    <alternativeName>
        <fullName evidence="4">Lysosomal cholesterol glycosyltransferase</fullName>
    </alternativeName>
    <alternativeName>
        <fullName evidence="4">Lysosomal galactosylceramidase</fullName>
        <ecNumber evidence="2">3.2.1.46</ecNumber>
    </alternativeName>
    <alternativeName>
        <fullName evidence="4">Lysosomal glycosylceramidase</fullName>
    </alternativeName>
</protein>
<evidence type="ECO:0000250" key="1"/>
<evidence type="ECO:0000250" key="2">
    <source>
        <dbReference type="UniProtKB" id="P04062"/>
    </source>
</evidence>
<evidence type="ECO:0000255" key="3"/>
<evidence type="ECO:0000305" key="4"/>
<name>GBA1_PANTR</name>
<proteinExistence type="inferred from homology"/>
<comment type="function">
    <text evidence="2">Glucosylceramidase that catalyzes, within the lysosomal compartment, the hydrolysis of glucosylceramides/GlcCers (such as beta-D-glucosyl-(1&lt;-&gt;1')-N-acylsphing-4-enine) into free ceramides (such as N-acylsphing-4-enine) and glucose. Plays a central role in the degradation of complex lipids and the turnover of cellular membranes. Through the production of ceramides, participates in the PKC-activated salvage pathway of ceramide formation. Catalyzes the glucosylation of cholesterol, through a transglucosylation reaction where glucose is transferred from GlcCer to cholesterol. GlcCer containing mono-unsaturated fatty acids (such as beta-D-glucosyl-N-(9Z-octadecenoyl)-sphing-4-enine) are preferred as glucose donors for cholesterol glucosylation when compared with GlcCer containing same chain length of saturated fatty acids (such as beta-D-glucosyl-N-octadecanoyl-sphing-4-enine). Under specific conditions, may alternatively catalyze the reverse reaction, transferring glucose from cholesteryl 3-beta-D-glucoside to ceramide. Can also hydrolyze cholesteryl 3-beta-D-glucoside producing glucose and cholesterol. Catalyzes the hydrolysis of galactosylceramides/GalCers (such as beta-D-galactosyl-(1&lt;-&gt;1')-N-acylsphing-4-enine), as well as the transfer of galactose between GalCers and cholesterol in vitro, but with lower activity than with GlcCers. Contrary to GlcCer and GalCer, xylosylceramide/XylCer (such as beta-D-xyosyl-(1&lt;-&gt;1')-N-acylsphing-4-enine) is not a good substrate for hydrolysis, however it is a good xylose donor for transxylosylation activity to form cholesteryl 3-beta-D-xyloside.</text>
</comment>
<comment type="catalytic activity">
    <reaction evidence="2">
        <text>a beta-D-glucosyl-(1&lt;-&gt;1')-N-acylsphing-4-enine + H2O = an N-acylsphing-4-enine + D-glucose</text>
        <dbReference type="Rhea" id="RHEA:13269"/>
        <dbReference type="ChEBI" id="CHEBI:4167"/>
        <dbReference type="ChEBI" id="CHEBI:15377"/>
        <dbReference type="ChEBI" id="CHEBI:22801"/>
        <dbReference type="ChEBI" id="CHEBI:52639"/>
        <dbReference type="EC" id="3.2.1.45"/>
    </reaction>
    <physiologicalReaction direction="left-to-right" evidence="2">
        <dbReference type="Rhea" id="RHEA:13270"/>
    </physiologicalReaction>
</comment>
<comment type="catalytic activity">
    <reaction evidence="2">
        <text>a beta-D-galactosyl-(1&lt;-&gt;1')-N-acylsphing-4-enine + H2O = an N-acylsphing-4-enine + D-galactose</text>
        <dbReference type="Rhea" id="RHEA:14297"/>
        <dbReference type="ChEBI" id="CHEBI:4139"/>
        <dbReference type="ChEBI" id="CHEBI:15377"/>
        <dbReference type="ChEBI" id="CHEBI:18390"/>
        <dbReference type="ChEBI" id="CHEBI:52639"/>
        <dbReference type="EC" id="3.2.1.46"/>
    </reaction>
    <physiologicalReaction direction="left-to-right" evidence="2">
        <dbReference type="Rhea" id="RHEA:14298"/>
    </physiologicalReaction>
</comment>
<comment type="catalytic activity">
    <reaction evidence="2">
        <text>cholesteryl 3-beta-D-glucoside + H2O = cholesterol + D-glucose</text>
        <dbReference type="Rhea" id="RHEA:11956"/>
        <dbReference type="ChEBI" id="CHEBI:4167"/>
        <dbReference type="ChEBI" id="CHEBI:15377"/>
        <dbReference type="ChEBI" id="CHEBI:16113"/>
        <dbReference type="ChEBI" id="CHEBI:17495"/>
    </reaction>
    <physiologicalReaction direction="left-to-right" evidence="2">
        <dbReference type="Rhea" id="RHEA:11957"/>
    </physiologicalReaction>
</comment>
<comment type="catalytic activity">
    <reaction evidence="2">
        <text>a beta-D-glucosyl-(1&lt;-&gt;1')-N-acylsphing-4-enine + cholesterol = cholesteryl 3-beta-D-glucoside + an N-acylsphing-4-enine</text>
        <dbReference type="Rhea" id="RHEA:58264"/>
        <dbReference type="ChEBI" id="CHEBI:16113"/>
        <dbReference type="ChEBI" id="CHEBI:17495"/>
        <dbReference type="ChEBI" id="CHEBI:22801"/>
        <dbReference type="ChEBI" id="CHEBI:52639"/>
    </reaction>
    <physiologicalReaction direction="left-to-right" evidence="2">
        <dbReference type="Rhea" id="RHEA:58265"/>
    </physiologicalReaction>
    <physiologicalReaction direction="right-to-left" evidence="2">
        <dbReference type="Rhea" id="RHEA:58266"/>
    </physiologicalReaction>
</comment>
<comment type="catalytic activity">
    <reaction evidence="2">
        <text>beta-D-glucosyl-N-(9Z-octadecenoyl)-sphing-4E-enine + cholesterol = N-(9Z-octadecenoyl)-sphing-4-enine + cholesteryl 3-beta-D-glucoside</text>
        <dbReference type="Rhea" id="RHEA:58324"/>
        <dbReference type="ChEBI" id="CHEBI:16113"/>
        <dbReference type="ChEBI" id="CHEBI:17495"/>
        <dbReference type="ChEBI" id="CHEBI:77996"/>
        <dbReference type="ChEBI" id="CHEBI:139140"/>
    </reaction>
    <physiologicalReaction direction="left-to-right" evidence="2">
        <dbReference type="Rhea" id="RHEA:58325"/>
    </physiologicalReaction>
    <physiologicalReaction direction="right-to-left" evidence="2">
        <dbReference type="Rhea" id="RHEA:58326"/>
    </physiologicalReaction>
</comment>
<comment type="catalytic activity">
    <reaction evidence="2">
        <text>beta-D-glucosyl-N-octanoylsphing-4E-enine + cholesterol = N-octanoylsphing-4-enine + cholesteryl 3-beta-D-glucoside</text>
        <dbReference type="Rhea" id="RHEA:70303"/>
        <dbReference type="ChEBI" id="CHEBI:16113"/>
        <dbReference type="ChEBI" id="CHEBI:17495"/>
        <dbReference type="ChEBI" id="CHEBI:45815"/>
        <dbReference type="ChEBI" id="CHEBI:65222"/>
    </reaction>
    <physiologicalReaction direction="left-to-right" evidence="2">
        <dbReference type="Rhea" id="RHEA:70304"/>
    </physiologicalReaction>
    <physiologicalReaction direction="right-to-left" evidence="2">
        <dbReference type="Rhea" id="RHEA:70305"/>
    </physiologicalReaction>
</comment>
<comment type="catalytic activity">
    <reaction evidence="2">
        <text>beta-D-glucosyl-N-dodecanoylsphing-4-enine + cholesterol = N-dodecanoylsphing-4-enine + cholesteryl 3-beta-D-glucoside</text>
        <dbReference type="Rhea" id="RHEA:70307"/>
        <dbReference type="ChEBI" id="CHEBI:16113"/>
        <dbReference type="ChEBI" id="CHEBI:17495"/>
        <dbReference type="ChEBI" id="CHEBI:72956"/>
        <dbReference type="ChEBI" id="CHEBI:76297"/>
    </reaction>
    <physiologicalReaction direction="left-to-right" evidence="2">
        <dbReference type="Rhea" id="RHEA:70308"/>
    </physiologicalReaction>
    <physiologicalReaction direction="right-to-left" evidence="2">
        <dbReference type="Rhea" id="RHEA:70309"/>
    </physiologicalReaction>
</comment>
<comment type="catalytic activity">
    <reaction evidence="2">
        <text>beta-D-glucosyl-(1&lt;-&gt;1)-N-octadecanoylsphing-4-enine + cholesterol = N-octadecanoylsphing-4-enine + cholesteryl 3-beta-D-glucoside</text>
        <dbReference type="Rhea" id="RHEA:70311"/>
        <dbReference type="ChEBI" id="CHEBI:16113"/>
        <dbReference type="ChEBI" id="CHEBI:17495"/>
        <dbReference type="ChEBI" id="CHEBI:72961"/>
        <dbReference type="ChEBI" id="CHEBI:84719"/>
    </reaction>
    <physiologicalReaction direction="left-to-right" evidence="2">
        <dbReference type="Rhea" id="RHEA:70312"/>
    </physiologicalReaction>
    <physiologicalReaction direction="right-to-left" evidence="2">
        <dbReference type="Rhea" id="RHEA:70313"/>
    </physiologicalReaction>
</comment>
<comment type="catalytic activity">
    <reaction evidence="2">
        <text>beta-D-glucosyl-(1&lt;-&gt;1')-N-(15Z-tetracosenoyl)-sphing-4-enine + cholesterol = N-(15Z-tetracosenoyl)-sphing-4-enine + cholesteryl 3-beta-D-glucoside</text>
        <dbReference type="Rhea" id="RHEA:70315"/>
        <dbReference type="ChEBI" id="CHEBI:16113"/>
        <dbReference type="ChEBI" id="CHEBI:17495"/>
        <dbReference type="ChEBI" id="CHEBI:74450"/>
        <dbReference type="ChEBI" id="CHEBI:76302"/>
    </reaction>
    <physiologicalReaction direction="left-to-right" evidence="2">
        <dbReference type="Rhea" id="RHEA:70316"/>
    </physiologicalReaction>
    <physiologicalReaction direction="right-to-left" evidence="2">
        <dbReference type="Rhea" id="RHEA:70317"/>
    </physiologicalReaction>
</comment>
<comment type="catalytic activity">
    <reaction evidence="2">
        <text>a beta-D-galactosyl-(1&lt;-&gt;1')-N-acylsphing-4-enine + cholesterol = cholesteryl 3-beta-D-galactoside + an N-acylsphing-4-enine</text>
        <dbReference type="Rhea" id="RHEA:70235"/>
        <dbReference type="ChEBI" id="CHEBI:16113"/>
        <dbReference type="ChEBI" id="CHEBI:18390"/>
        <dbReference type="ChEBI" id="CHEBI:52639"/>
        <dbReference type="ChEBI" id="CHEBI:189066"/>
    </reaction>
    <physiologicalReaction direction="left-to-right" evidence="2">
        <dbReference type="Rhea" id="RHEA:70236"/>
    </physiologicalReaction>
    <physiologicalReaction direction="right-to-left" evidence="2">
        <dbReference type="Rhea" id="RHEA:70237"/>
    </physiologicalReaction>
</comment>
<comment type="catalytic activity">
    <reaction evidence="2">
        <text>1-(beta-D-galactosyl)-N-dodecanoylsphing-4-enine + cholesterol = cholesteryl 3-beta-D-galactoside + N-dodecanoylsphing-4-enine</text>
        <dbReference type="Rhea" id="RHEA:70255"/>
        <dbReference type="ChEBI" id="CHEBI:16113"/>
        <dbReference type="ChEBI" id="CHEBI:72956"/>
        <dbReference type="ChEBI" id="CHEBI:73432"/>
        <dbReference type="ChEBI" id="CHEBI:189066"/>
    </reaction>
    <physiologicalReaction direction="left-to-right" evidence="2">
        <dbReference type="Rhea" id="RHEA:70256"/>
    </physiologicalReaction>
    <physiologicalReaction direction="right-to-left" evidence="2">
        <dbReference type="Rhea" id="RHEA:70257"/>
    </physiologicalReaction>
</comment>
<comment type="catalytic activity">
    <reaction evidence="2">
        <text>a beta-D-xylosyl-(1&lt;-&gt;1')-N-acylsphing-4-enine + cholesterol = cholesteryl 3-beta-D-xyloside + an N-acylsphing-4-enine</text>
        <dbReference type="Rhea" id="RHEA:70239"/>
        <dbReference type="ChEBI" id="CHEBI:16113"/>
        <dbReference type="ChEBI" id="CHEBI:52639"/>
        <dbReference type="ChEBI" id="CHEBI:189067"/>
        <dbReference type="ChEBI" id="CHEBI:189068"/>
    </reaction>
    <physiologicalReaction direction="left-to-right" evidence="2">
        <dbReference type="Rhea" id="RHEA:70240"/>
    </physiologicalReaction>
</comment>
<comment type="catalytic activity">
    <reaction evidence="2">
        <text>beta-D-xylosyl-(1&lt;-&gt;1')-N-(9Z-octadecenoyl)-sphing-4-enine + cholesterol = cholesteryl 3-beta-D-xyloside + N-(9Z-octadecenoyl)-sphing-4-enine</text>
        <dbReference type="Rhea" id="RHEA:70251"/>
        <dbReference type="ChEBI" id="CHEBI:16113"/>
        <dbReference type="ChEBI" id="CHEBI:77996"/>
        <dbReference type="ChEBI" id="CHEBI:189067"/>
        <dbReference type="ChEBI" id="CHEBI:189081"/>
    </reaction>
    <physiologicalReaction direction="left-to-right" evidence="2">
        <dbReference type="Rhea" id="RHEA:70252"/>
    </physiologicalReaction>
</comment>
<comment type="pathway">
    <text evidence="2">Steroid metabolism; cholesterol metabolism.</text>
</comment>
<comment type="pathway">
    <text evidence="2">Sphingolipid metabolism.</text>
</comment>
<comment type="subunit">
    <text evidence="2">Interacts with saposin-C. Interacts with SCARB2. Interacts with TCP1. Interacts with GRN; this interaction prevents aggregation of GBA1-SCARB2 complex via interaction with HSPA1A upon stress (By similarity).</text>
</comment>
<comment type="subcellular location">
    <subcellularLocation>
        <location evidence="2">Lysosome membrane</location>
        <topology evidence="2">Peripheral membrane protein</topology>
        <orientation evidence="2">Lumenal side</orientation>
    </subcellularLocation>
    <text evidence="2">Interaction with saposin-C promotes membrane association. Targeting to lysosomes occurs through an alternative MPR-independent mechanism via SCARB2.</text>
</comment>
<comment type="similarity">
    <text evidence="4">Belongs to the glycosyl hydrolase 30 family.</text>
</comment>